<gene>
    <name type="primary">tfdD</name>
</gene>
<proteinExistence type="evidence at protein level"/>
<dbReference type="EC" id="5.5.1.7"/>
<dbReference type="EMBL" id="AY078159">
    <property type="protein sequence ID" value="AAK57008.2"/>
    <property type="molecule type" value="Genomic_DNA"/>
</dbReference>
<dbReference type="EMBL" id="AF176244">
    <property type="protein sequence ID" value="AAD55083.1"/>
    <property type="molecule type" value="Genomic_DNA"/>
</dbReference>
<dbReference type="RefSeq" id="WP_011255151.1">
    <property type="nucleotide sequence ID" value="NC_019283.1"/>
</dbReference>
<dbReference type="RefSeq" id="YP_006961882.1">
    <property type="nucleotide sequence ID" value="NC_019283.1"/>
</dbReference>
<dbReference type="SMR" id="Q9RNZ9"/>
<dbReference type="UniPathway" id="UPA00083"/>
<dbReference type="PRO" id="PR:Q9RNZ9"/>
<dbReference type="GO" id="GO:0018850">
    <property type="term" value="F:chloromuconate cycloisomerase activity"/>
    <property type="evidence" value="ECO:0007669"/>
    <property type="project" value="UniProtKB-EC"/>
</dbReference>
<dbReference type="GO" id="GO:0030145">
    <property type="term" value="F:manganese ion binding"/>
    <property type="evidence" value="ECO:0007669"/>
    <property type="project" value="InterPro"/>
</dbReference>
<dbReference type="GO" id="GO:0018849">
    <property type="term" value="F:muconate cycloisomerase activity"/>
    <property type="evidence" value="ECO:0007669"/>
    <property type="project" value="InterPro"/>
</dbReference>
<dbReference type="GO" id="GO:0009063">
    <property type="term" value="P:amino acid catabolic process"/>
    <property type="evidence" value="ECO:0007669"/>
    <property type="project" value="InterPro"/>
</dbReference>
<dbReference type="CDD" id="cd03318">
    <property type="entry name" value="MLE"/>
    <property type="match status" value="1"/>
</dbReference>
<dbReference type="Gene3D" id="3.20.20.120">
    <property type="entry name" value="Enolase-like C-terminal domain"/>
    <property type="match status" value="1"/>
</dbReference>
<dbReference type="Gene3D" id="3.30.390.10">
    <property type="entry name" value="Enolase-like, N-terminal domain"/>
    <property type="match status" value="1"/>
</dbReference>
<dbReference type="InterPro" id="IPR013370">
    <property type="entry name" value="Chloromuconate_cycloisomerase"/>
</dbReference>
<dbReference type="InterPro" id="IPR036849">
    <property type="entry name" value="Enolase-like_C_sf"/>
</dbReference>
<dbReference type="InterPro" id="IPR029017">
    <property type="entry name" value="Enolase-like_N"/>
</dbReference>
<dbReference type="InterPro" id="IPR029065">
    <property type="entry name" value="Enolase_C-like"/>
</dbReference>
<dbReference type="InterPro" id="IPR018110">
    <property type="entry name" value="Mandel_Rmase/mucon_lact_enz_CS"/>
</dbReference>
<dbReference type="InterPro" id="IPR013342">
    <property type="entry name" value="Mandelate_racemase_C"/>
</dbReference>
<dbReference type="InterPro" id="IPR013341">
    <property type="entry name" value="Mandelate_racemase_N_dom"/>
</dbReference>
<dbReference type="NCBIfam" id="TIGR02534">
    <property type="entry name" value="mucon_cyclo"/>
    <property type="match status" value="1"/>
</dbReference>
<dbReference type="PANTHER" id="PTHR48073:SF2">
    <property type="entry name" value="O-SUCCINYLBENZOATE SYNTHASE"/>
    <property type="match status" value="1"/>
</dbReference>
<dbReference type="PANTHER" id="PTHR48073">
    <property type="entry name" value="O-SUCCINYLBENZOATE SYNTHASE-RELATED"/>
    <property type="match status" value="1"/>
</dbReference>
<dbReference type="Pfam" id="PF13378">
    <property type="entry name" value="MR_MLE_C"/>
    <property type="match status" value="1"/>
</dbReference>
<dbReference type="Pfam" id="PF02746">
    <property type="entry name" value="MR_MLE_N"/>
    <property type="match status" value="1"/>
</dbReference>
<dbReference type="SFLD" id="SFLDG01258">
    <property type="entry name" value="(chloro)muconate_cycloisomeras"/>
    <property type="match status" value="1"/>
</dbReference>
<dbReference type="SFLD" id="SFLDS00001">
    <property type="entry name" value="Enolase"/>
    <property type="match status" value="1"/>
</dbReference>
<dbReference type="SFLD" id="SFLDF00009">
    <property type="entry name" value="o-succinylbenzoate_synthase"/>
    <property type="match status" value="1"/>
</dbReference>
<dbReference type="SMART" id="SM00922">
    <property type="entry name" value="MR_MLE"/>
    <property type="match status" value="1"/>
</dbReference>
<dbReference type="SUPFAM" id="SSF51604">
    <property type="entry name" value="Enolase C-terminal domain-like"/>
    <property type="match status" value="1"/>
</dbReference>
<dbReference type="SUPFAM" id="SSF54826">
    <property type="entry name" value="Enolase N-terminal domain-like"/>
    <property type="match status" value="1"/>
</dbReference>
<dbReference type="PROSITE" id="PS00908">
    <property type="entry name" value="MR_MLE_1"/>
    <property type="match status" value="1"/>
</dbReference>
<dbReference type="PROSITE" id="PS00909">
    <property type="entry name" value="MR_MLE_2"/>
    <property type="match status" value="1"/>
</dbReference>
<accession>Q9RNZ9</accession>
<accession>Q93T14</accession>
<accession>Q9WXC9</accession>
<organism>
    <name type="scientific">Delftia acidovorans</name>
    <name type="common">Pseudomonas acidovorans</name>
    <name type="synonym">Comamonas acidovorans</name>
    <dbReference type="NCBI Taxonomy" id="80866"/>
    <lineage>
        <taxon>Bacteria</taxon>
        <taxon>Pseudomonadati</taxon>
        <taxon>Pseudomonadota</taxon>
        <taxon>Betaproteobacteria</taxon>
        <taxon>Burkholderiales</taxon>
        <taxon>Comamonadaceae</taxon>
        <taxon>Delftia</taxon>
    </lineage>
</organism>
<sequence>MKIEAISTTIVDVPTRRPLQMSFTTVHKQSYVIVQVTAGGLVGIGEGGSVGGPTWGSESAETIKVIIDNYLAPLLIGKDASNLSEARALMDRAVTGNLSAKAAIDIALHDLKARALNLSIADLIGGTMRKSIPIAWTLASGDTARDIDSALEMIEARRHNRFKVKLGARTPAQDLEHIRSIVKAVGDKASVRVDVNQGWDEQTASIWIPRLEEAGVELVEQPVPRANFGALRRLTEQNGVAILADESLSSLSSAFELARDRAVDAFSLKLCNMGGIANTLKVAAIAEAAGISSYGGTMLDSTVGTAAALHVYATLPSLPYGCELIGPWVLSDRLTQQDLEIKDFEVHLPVGSGLGVDLDHDKVRHYTRAA</sequence>
<keyword id="KW-0058">Aromatic hydrocarbons catabolism</keyword>
<keyword id="KW-0903">Direct protein sequencing</keyword>
<keyword id="KW-0413">Isomerase</keyword>
<keyword id="KW-0464">Manganese</keyword>
<keyword id="KW-0479">Metal-binding</keyword>
<reference key="1">
    <citation type="journal article" date="2003" name="Microbiology">
        <title>A transposon encoding the complete 2,4-dichlorophenoxyacetic acid degradation pathway in the alkalitolerant strain Delftia acidovorans P4a.</title>
        <authorList>
            <person name="Hoffmann D."/>
            <person name="Kleinsteuber S."/>
            <person name="Mueller R.H."/>
            <person name="Babel W."/>
        </authorList>
    </citation>
    <scope>NUCLEOTIDE SEQUENCE [GENOMIC DNA]</scope>
    <source>
        <strain>P4a</strain>
    </source>
</reference>
<reference key="2">
    <citation type="journal article" date="2001" name="Acta Biotechnol.">
        <title>Development and application of PCR primers for the detection of the tfd genes in Delftia acidovorans P4a involved in the degradation of 2,4-D.</title>
        <authorList>
            <person name="Hoffmann D."/>
            <person name="Kleinsteuber S."/>
            <person name="Mueller R.H."/>
            <person name="Babel W."/>
        </authorList>
    </citation>
    <scope>NUCLEOTIDE SEQUENCE [GENOMIC DNA] OF 67-268</scope>
    <source>
        <strain>P4a</strain>
    </source>
</reference>
<reference key="3">
    <citation type="journal article" date="2001" name="Microbiol. Res.">
        <title>Physiological and genetic characteristics of two bacterial strains utilizing phenoxypropionate and phenoxyacetate herbicides.</title>
        <authorList>
            <person name="Mueller R.H."/>
            <person name="Kleinsteuber S."/>
            <person name="Babel W."/>
        </authorList>
    </citation>
    <scope>NUCLEOTIDE SEQUENCE [GENOMIC DNA] OF 1-263</scope>
    <source>
        <strain>MC1</strain>
    </source>
</reference>
<reference key="4">
    <citation type="journal article" date="2004" name="Microbiology">
        <title>Regulation of catabolic enzymes during long-term exposure of Delftia acidovorans MC1 to chlorophenoxy herbicides.</title>
        <authorList>
            <person name="Benndorf D."/>
            <person name="Davidson I."/>
            <person name="Babel W."/>
        </authorList>
    </citation>
    <scope>PROTEIN SEQUENCE OF 1-16</scope>
    <scope>INDUCTION BY 2,4-DCPP</scope>
    <source>
        <strain>MC1</strain>
    </source>
</reference>
<name>TFDD_DELAC</name>
<feature type="chain" id="PRO_0000171258" description="Chloromuconate cycloisomerase">
    <location>
        <begin position="1"/>
        <end position="370"/>
    </location>
</feature>
<feature type="active site" description="Proton acceptor" evidence="1">
    <location>
        <position position="165"/>
    </location>
</feature>
<feature type="active site" description="Proton donor" evidence="1">
    <location>
        <position position="323"/>
    </location>
</feature>
<feature type="binding site" evidence="1">
    <location>
        <position position="194"/>
    </location>
    <ligand>
        <name>Mn(2+)</name>
        <dbReference type="ChEBI" id="CHEBI:29035"/>
    </ligand>
</feature>
<feature type="binding site" evidence="1">
    <location>
        <position position="220"/>
    </location>
    <ligand>
        <name>Mn(2+)</name>
        <dbReference type="ChEBI" id="CHEBI:29035"/>
    </ligand>
</feature>
<feature type="binding site" evidence="1">
    <location>
        <position position="245"/>
    </location>
    <ligand>
        <name>Mn(2+)</name>
        <dbReference type="ChEBI" id="CHEBI:29035"/>
    </ligand>
</feature>
<comment type="catalytic activity">
    <reaction>
        <text>2-[(2R)-2-chloro-2,5-dihydro-5-oxofuryl]acetate = 3-chloro-cis,cis-muconate + H(+)</text>
        <dbReference type="Rhea" id="RHEA:11032"/>
        <dbReference type="ChEBI" id="CHEBI:15378"/>
        <dbReference type="ChEBI" id="CHEBI:17589"/>
        <dbReference type="ChEBI" id="CHEBI:85538"/>
        <dbReference type="EC" id="5.5.1.7"/>
    </reaction>
</comment>
<comment type="cofactor">
    <cofactor evidence="1">
        <name>Mn(2+)</name>
        <dbReference type="ChEBI" id="CHEBI:29035"/>
    </cofactor>
</comment>
<comment type="pathway">
    <text>Aromatic compound metabolism; 3-chlorocatechol degradation.</text>
</comment>
<comment type="induction">
    <text evidence="2">By 2,4-dichlorophenoxypropionic acid (2,4-DCPP).</text>
</comment>
<comment type="miscellaneous">
    <text>Different ratios of isoforms are detectable, depending on concentration of dichlorprop.</text>
</comment>
<comment type="similarity">
    <text evidence="3">Belongs to the mandelate racemase/muconate lactonizing enzyme family.</text>
</comment>
<protein>
    <recommendedName>
        <fullName>Chloromuconate cycloisomerase</fullName>
        <ecNumber>5.5.1.7</ecNumber>
    </recommendedName>
</protein>
<evidence type="ECO:0000250" key="1"/>
<evidence type="ECO:0000269" key="2">
    <source>
    </source>
</evidence>
<evidence type="ECO:0000305" key="3"/>